<accession>Q2UTL1</accession>
<reference key="1">
    <citation type="journal article" date="2005" name="Nature">
        <title>Genome sequencing and analysis of Aspergillus oryzae.</title>
        <authorList>
            <person name="Machida M."/>
            <person name="Asai K."/>
            <person name="Sano M."/>
            <person name="Tanaka T."/>
            <person name="Kumagai T."/>
            <person name="Terai G."/>
            <person name="Kusumoto K."/>
            <person name="Arima T."/>
            <person name="Akita O."/>
            <person name="Kashiwagi Y."/>
            <person name="Abe K."/>
            <person name="Gomi K."/>
            <person name="Horiuchi H."/>
            <person name="Kitamoto K."/>
            <person name="Kobayashi T."/>
            <person name="Takeuchi M."/>
            <person name="Denning D.W."/>
            <person name="Galagan J.E."/>
            <person name="Nierman W.C."/>
            <person name="Yu J."/>
            <person name="Archer D.B."/>
            <person name="Bennett J.W."/>
            <person name="Bhatnagar D."/>
            <person name="Cleveland T.E."/>
            <person name="Fedorova N.D."/>
            <person name="Gotoh O."/>
            <person name="Horikawa H."/>
            <person name="Hosoyama A."/>
            <person name="Ichinomiya M."/>
            <person name="Igarashi R."/>
            <person name="Iwashita K."/>
            <person name="Juvvadi P.R."/>
            <person name="Kato M."/>
            <person name="Kato Y."/>
            <person name="Kin T."/>
            <person name="Kokubun A."/>
            <person name="Maeda H."/>
            <person name="Maeyama N."/>
            <person name="Maruyama J."/>
            <person name="Nagasaki H."/>
            <person name="Nakajima T."/>
            <person name="Oda K."/>
            <person name="Okada K."/>
            <person name="Paulsen I."/>
            <person name="Sakamoto K."/>
            <person name="Sawano T."/>
            <person name="Takahashi M."/>
            <person name="Takase K."/>
            <person name="Terabayashi Y."/>
            <person name="Wortman J.R."/>
            <person name="Yamada O."/>
            <person name="Yamagata Y."/>
            <person name="Anazawa H."/>
            <person name="Hata Y."/>
            <person name="Koide Y."/>
            <person name="Komori T."/>
            <person name="Koyama Y."/>
            <person name="Minetoki T."/>
            <person name="Suharnan S."/>
            <person name="Tanaka A."/>
            <person name="Isono K."/>
            <person name="Kuhara S."/>
            <person name="Ogasawara N."/>
            <person name="Kikuchi H."/>
        </authorList>
    </citation>
    <scope>NUCLEOTIDE SEQUENCE [LARGE SCALE GENOMIC DNA]</scope>
    <source>
        <strain>ATCC 42149 / RIB 40</strain>
    </source>
</reference>
<gene>
    <name type="primary">gmt1</name>
    <name type="synonym">vrg4</name>
    <name type="ORF">AO090009000688</name>
</gene>
<sequence length="381" mass="41469">MVESKKTDDYAIEMDKIDQGSKNFEAAAPPQPRSVPSSSLSGNPVLPVLAYCGSSILMTVMNKYVLSGLDFNLNFFLLCVQSIVCIIAIQTCKFCGLITYRDFSADEAKKWFPISLLLIGMIYTGSKALQFLSIPVYTIFKNLTIILIAYGEVLWFGGSVTGLTLFSFGLMVLSSIIAAWADIKHAVESSGDTSAQVSTLNAGYIWMLINCLCTSSYVLGMRKRIKLTNFKDFDTMFYNNLLSIPVLVVLTGLMEDWSSANIDRNFPQADRSSIMFAMILSGLSSVFISYTSAWCVRVTSSTTYSMVGALNKLPIALSGLIFFDAPVTFPSVSAIAVGFVSGIVYAIAKIKQNAKPKTGVLPTSNPLVSASSQSMRDSLRS</sequence>
<feature type="chain" id="PRO_0000333512" description="GDP-mannose transporter">
    <location>
        <begin position="1"/>
        <end position="381"/>
    </location>
</feature>
<feature type="topological domain" description="Cytoplasmic" evidence="1">
    <location>
        <begin position="1"/>
        <end position="39"/>
    </location>
</feature>
<feature type="transmembrane region" description="Helical" evidence="2">
    <location>
        <begin position="40"/>
        <end position="60"/>
    </location>
</feature>
<feature type="topological domain" description="Lumenal" evidence="1">
    <location>
        <begin position="61"/>
        <end position="68"/>
    </location>
</feature>
<feature type="transmembrane region" description="Helical" evidence="2">
    <location>
        <begin position="69"/>
        <end position="89"/>
    </location>
</feature>
<feature type="topological domain" description="Cytoplasmic" evidence="1">
    <location>
        <begin position="90"/>
        <end position="109"/>
    </location>
</feature>
<feature type="transmembrane region" description="Helical" evidence="2">
    <location>
        <begin position="110"/>
        <end position="126"/>
    </location>
</feature>
<feature type="topological domain" description="Lumenal" evidence="1">
    <location>
        <begin position="127"/>
        <end position="133"/>
    </location>
</feature>
<feature type="transmembrane region" description="Helical" evidence="2">
    <location>
        <begin position="134"/>
        <end position="150"/>
    </location>
</feature>
<feature type="topological domain" description="Cytoplasmic" evidence="1">
    <location>
        <begin position="151"/>
        <end position="159"/>
    </location>
</feature>
<feature type="transmembrane region" description="Helical" evidence="2">
    <location>
        <begin position="160"/>
        <end position="181"/>
    </location>
</feature>
<feature type="topological domain" description="Lumenal" evidence="1">
    <location>
        <begin position="182"/>
        <end position="199"/>
    </location>
</feature>
<feature type="transmembrane region" description="Helical" evidence="2">
    <location>
        <begin position="200"/>
        <end position="220"/>
    </location>
</feature>
<feature type="topological domain" description="Cytoplasmic" evidence="1">
    <location>
        <begin position="221"/>
        <end position="232"/>
    </location>
</feature>
<feature type="transmembrane region" description="Helical" evidence="2">
    <location>
        <begin position="233"/>
        <end position="253"/>
    </location>
</feature>
<feature type="topological domain" description="Lumenal" evidence="1">
    <location>
        <begin position="254"/>
        <end position="273"/>
    </location>
</feature>
<feature type="transmembrane region" description="Helical" evidence="2">
    <location>
        <begin position="274"/>
        <end position="294"/>
    </location>
</feature>
<feature type="topological domain" description="Cytoplasmic" evidence="1">
    <location>
        <begin position="295"/>
        <end position="302"/>
    </location>
</feature>
<feature type="transmembrane region" description="Helical" evidence="2">
    <location>
        <begin position="303"/>
        <end position="323"/>
    </location>
</feature>
<feature type="topological domain" description="Lumenal" evidence="1">
    <location>
        <begin position="324"/>
        <end position="326"/>
    </location>
</feature>
<feature type="transmembrane region" description="Helical" evidence="2">
    <location>
        <begin position="327"/>
        <end position="347"/>
    </location>
</feature>
<feature type="topological domain" description="Cytoplasmic" evidence="1">
    <location>
        <begin position="348"/>
        <end position="381"/>
    </location>
</feature>
<evidence type="ECO:0000250" key="1"/>
<evidence type="ECO:0000255" key="2"/>
<evidence type="ECO:0000305" key="3"/>
<keyword id="KW-0968">Cytoplasmic vesicle</keyword>
<keyword id="KW-0256">Endoplasmic reticulum</keyword>
<keyword id="KW-0333">Golgi apparatus</keyword>
<keyword id="KW-0472">Membrane</keyword>
<keyword id="KW-1185">Reference proteome</keyword>
<keyword id="KW-0762">Sugar transport</keyword>
<keyword id="KW-0812">Transmembrane</keyword>
<keyword id="KW-1133">Transmembrane helix</keyword>
<keyword id="KW-0813">Transport</keyword>
<protein>
    <recommendedName>
        <fullName>GDP-mannose transporter</fullName>
        <shortName>GMT</shortName>
    </recommendedName>
</protein>
<name>GMT_ASPOR</name>
<proteinExistence type="inferred from homology"/>
<comment type="function">
    <text evidence="1">Involved in the import of GDP-mannose from the cytoplasm into the Golgi lumen.</text>
</comment>
<comment type="subunit">
    <text evidence="1">Homooligomer.</text>
</comment>
<comment type="subcellular location">
    <subcellularLocation>
        <location evidence="1">Golgi apparatus membrane</location>
        <topology evidence="1">Multi-pass membrane protein</topology>
    </subcellularLocation>
    <subcellularLocation>
        <location evidence="1">Cytoplasmic vesicle membrane</location>
        <topology evidence="1">Multi-pass membrane protein</topology>
    </subcellularLocation>
    <subcellularLocation>
        <location evidence="1">Endoplasmic reticulum membrane</location>
        <topology evidence="1">Multi-pass membrane protein</topology>
    </subcellularLocation>
</comment>
<comment type="similarity">
    <text evidence="3">Belongs to the TPT transporter family. SLC35D subfamily.</text>
</comment>
<comment type="sequence caution" evidence="3">
    <conflict type="erroneous initiation">
        <sequence resource="EMBL-CDS" id="BAE55104"/>
    </conflict>
</comment>
<organism>
    <name type="scientific">Aspergillus oryzae (strain ATCC 42149 / RIB 40)</name>
    <name type="common">Yellow koji mold</name>
    <dbReference type="NCBI Taxonomy" id="510516"/>
    <lineage>
        <taxon>Eukaryota</taxon>
        <taxon>Fungi</taxon>
        <taxon>Dikarya</taxon>
        <taxon>Ascomycota</taxon>
        <taxon>Pezizomycotina</taxon>
        <taxon>Eurotiomycetes</taxon>
        <taxon>Eurotiomycetidae</taxon>
        <taxon>Eurotiales</taxon>
        <taxon>Aspergillaceae</taxon>
        <taxon>Aspergillus</taxon>
        <taxon>Aspergillus subgen. Circumdati</taxon>
    </lineage>
</organism>
<dbReference type="EMBL" id="BA000049">
    <property type="protein sequence ID" value="BAE55104.1"/>
    <property type="status" value="ALT_INIT"/>
    <property type="molecule type" value="Genomic_DNA"/>
</dbReference>
<dbReference type="RefSeq" id="XP_001817106.2">
    <property type="nucleotide sequence ID" value="XM_001817054.2"/>
</dbReference>
<dbReference type="SMR" id="Q2UTL1"/>
<dbReference type="STRING" id="510516.Q2UTL1"/>
<dbReference type="EnsemblFungi" id="BAE55104">
    <property type="protein sequence ID" value="BAE55104"/>
    <property type="gene ID" value="AO090009000688"/>
</dbReference>
<dbReference type="GeneID" id="5989036"/>
<dbReference type="KEGG" id="aor:AO090009000688"/>
<dbReference type="VEuPathDB" id="FungiDB:AO090009000688"/>
<dbReference type="Proteomes" id="UP000006564">
    <property type="component" value="Chromosome 1"/>
</dbReference>
<dbReference type="GO" id="GO:0030659">
    <property type="term" value="C:cytoplasmic vesicle membrane"/>
    <property type="evidence" value="ECO:0007669"/>
    <property type="project" value="UniProtKB-SubCell"/>
</dbReference>
<dbReference type="GO" id="GO:0005789">
    <property type="term" value="C:endoplasmic reticulum membrane"/>
    <property type="evidence" value="ECO:0007669"/>
    <property type="project" value="UniProtKB-SubCell"/>
</dbReference>
<dbReference type="GO" id="GO:0000139">
    <property type="term" value="C:Golgi membrane"/>
    <property type="evidence" value="ECO:0007669"/>
    <property type="project" value="UniProtKB-SubCell"/>
</dbReference>
<dbReference type="GO" id="GO:0005458">
    <property type="term" value="F:GDP-mannose transmembrane transporter activity"/>
    <property type="evidence" value="ECO:0007669"/>
    <property type="project" value="EnsemblFungi"/>
</dbReference>
<dbReference type="InterPro" id="IPR013657">
    <property type="entry name" value="SCL35B1-4/HUT1"/>
</dbReference>
<dbReference type="InterPro" id="IPR050186">
    <property type="entry name" value="TPT_transporter"/>
</dbReference>
<dbReference type="NCBIfam" id="TIGR00803">
    <property type="entry name" value="nst"/>
    <property type="match status" value="1"/>
</dbReference>
<dbReference type="PANTHER" id="PTHR11132">
    <property type="entry name" value="SOLUTE CARRIER FAMILY 35"/>
    <property type="match status" value="1"/>
</dbReference>
<dbReference type="Pfam" id="PF08449">
    <property type="entry name" value="UAA"/>
    <property type="match status" value="1"/>
</dbReference>
<dbReference type="SUPFAM" id="SSF103481">
    <property type="entry name" value="Multidrug resistance efflux transporter EmrE"/>
    <property type="match status" value="1"/>
</dbReference>